<organism>
    <name type="scientific">Arabidopsis thaliana</name>
    <name type="common">Mouse-ear cress</name>
    <dbReference type="NCBI Taxonomy" id="3702"/>
    <lineage>
        <taxon>Eukaryota</taxon>
        <taxon>Viridiplantae</taxon>
        <taxon>Streptophyta</taxon>
        <taxon>Embryophyta</taxon>
        <taxon>Tracheophyta</taxon>
        <taxon>Spermatophyta</taxon>
        <taxon>Magnoliopsida</taxon>
        <taxon>eudicotyledons</taxon>
        <taxon>Gunneridae</taxon>
        <taxon>Pentapetalae</taxon>
        <taxon>rosids</taxon>
        <taxon>malvids</taxon>
        <taxon>Brassicales</taxon>
        <taxon>Brassicaceae</taxon>
        <taxon>Camelineae</taxon>
        <taxon>Arabidopsis</taxon>
    </lineage>
</organism>
<comment type="function">
    <text evidence="1">Catalyzes xyloglucan endohydrolysis (XEH) and/or endotransglycosylation (XET). Cleaves and religates xyloglucan polymers, an essential constituent of the primary cell wall, and thereby participates in cell wall construction of growing tissues (By similarity).</text>
</comment>
<comment type="catalytic activity">
    <reaction>
        <text>breaks a beta-(1-&gt;4) bond in the backbone of a xyloglucan and transfers the xyloglucanyl segment on to O-4 of the non-reducing terminal glucose residue of an acceptor, which can be a xyloglucan or an oligosaccharide of xyloglucan.</text>
        <dbReference type="EC" id="2.4.1.207"/>
    </reaction>
</comment>
<comment type="subcellular location">
    <subcellularLocation>
        <location evidence="5">Secreted</location>
        <location evidence="5">Cell wall</location>
    </subcellularLocation>
    <subcellularLocation>
        <location evidence="5">Secreted</location>
        <location evidence="5">Extracellular space</location>
        <location evidence="5">Apoplast</location>
    </subcellularLocation>
</comment>
<comment type="PTM">
    <text evidence="1">Contains at least one intrachain disulfide bond essential for its enzymatic activity.</text>
</comment>
<comment type="similarity">
    <text evidence="5">Belongs to the glycosyl hydrolase 16 family. XTH group 1 subfamily.</text>
</comment>
<sequence length="299" mass="34687">MTLINRSKPFVLLVGFSIISSLLLWVSQASVVSSGDFNKDFFVTWSPTHVNTSNDGRSRTLKLDQESGASFSSIQTFLFGQIDMKIKLIRGSSQGTVVAYYMSSDQPNRDEIDFEFLGNVNGQPYILQTNVYAEGLDNREERIHLWFDPAKDFHTYSILWNIHQIVFMVDQIPIRLYRNHGEKGVAYPRLQPMSVQASLWNGESWATRGGHDKIDWSKGPFVASFGDYKIDACIWIGNTSFCNGESTENWWNKNEFSSLTRVQKRWFKWVRKYHLIYDYCQDYGRFNNKLPKECSLPKY</sequence>
<feature type="signal peptide" evidence="3">
    <location>
        <begin position="1"/>
        <end position="29"/>
    </location>
</feature>
<feature type="chain" id="PRO_0000011810" description="Probable xyloglucan endotransglucosylase/hydrolase protein 10">
    <location>
        <begin position="30"/>
        <end position="299"/>
    </location>
</feature>
<feature type="domain" description="GH16" evidence="4">
    <location>
        <begin position="30"/>
        <end position="225"/>
    </location>
</feature>
<feature type="active site" description="Nucleophile" evidence="2">
    <location>
        <position position="111"/>
    </location>
</feature>
<feature type="active site" description="Proton donor" evidence="2">
    <location>
        <position position="115"/>
    </location>
</feature>
<feature type="binding site" evidence="2">
    <location>
        <position position="115"/>
    </location>
    <ligand>
        <name>xyloglucan</name>
        <dbReference type="ChEBI" id="CHEBI:18233"/>
    </ligand>
</feature>
<feature type="binding site" evidence="2">
    <location>
        <begin position="128"/>
        <end position="130"/>
    </location>
    <ligand>
        <name>xyloglucan</name>
        <dbReference type="ChEBI" id="CHEBI:18233"/>
    </ligand>
</feature>
<feature type="binding site" evidence="2">
    <location>
        <begin position="138"/>
        <end position="140"/>
    </location>
    <ligand>
        <name>xyloglucan</name>
        <dbReference type="ChEBI" id="CHEBI:18233"/>
    </ligand>
</feature>
<feature type="binding site" evidence="2">
    <location>
        <begin position="204"/>
        <end position="205"/>
    </location>
    <ligand>
        <name>xyloglucan</name>
        <dbReference type="ChEBI" id="CHEBI:18233"/>
    </ligand>
</feature>
<feature type="binding site" evidence="2">
    <location>
        <position position="209"/>
    </location>
    <ligand>
        <name>xyloglucan</name>
        <dbReference type="ChEBI" id="CHEBI:18233"/>
    </ligand>
</feature>
<feature type="binding site" evidence="2">
    <location>
        <position position="285"/>
    </location>
    <ligand>
        <name>xyloglucan</name>
        <dbReference type="ChEBI" id="CHEBI:18233"/>
    </ligand>
</feature>
<feature type="site" description="Important for catalytic activity" evidence="2">
    <location>
        <position position="113"/>
    </location>
</feature>
<feature type="glycosylation site" description="N-linked (GlcNAc...) asparagine" evidence="3">
    <location>
        <position position="51"/>
    </location>
</feature>
<feature type="glycosylation site" description="N-linked (GlcNAc...) asparagine" evidence="3">
    <location>
        <position position="238"/>
    </location>
</feature>
<feature type="disulfide bond" evidence="2">
    <location>
        <begin position="233"/>
        <end position="242"/>
    </location>
</feature>
<feature type="disulfide bond" evidence="2">
    <location>
        <begin position="280"/>
        <end position="294"/>
    </location>
</feature>
<reference key="1">
    <citation type="journal article" date="1999" name="Nature">
        <title>Sequence and analysis of chromosome 2 of the plant Arabidopsis thaliana.</title>
        <authorList>
            <person name="Lin X."/>
            <person name="Kaul S."/>
            <person name="Rounsley S.D."/>
            <person name="Shea T.P."/>
            <person name="Benito M.-I."/>
            <person name="Town C.D."/>
            <person name="Fujii C.Y."/>
            <person name="Mason T.M."/>
            <person name="Bowman C.L."/>
            <person name="Barnstead M.E."/>
            <person name="Feldblyum T.V."/>
            <person name="Buell C.R."/>
            <person name="Ketchum K.A."/>
            <person name="Lee J.J."/>
            <person name="Ronning C.M."/>
            <person name="Koo H.L."/>
            <person name="Moffat K.S."/>
            <person name="Cronin L.A."/>
            <person name="Shen M."/>
            <person name="Pai G."/>
            <person name="Van Aken S."/>
            <person name="Umayam L."/>
            <person name="Tallon L.J."/>
            <person name="Gill J.E."/>
            <person name="Adams M.D."/>
            <person name="Carrera A.J."/>
            <person name="Creasy T.H."/>
            <person name="Goodman H.M."/>
            <person name="Somerville C.R."/>
            <person name="Copenhaver G.P."/>
            <person name="Preuss D."/>
            <person name="Nierman W.C."/>
            <person name="White O."/>
            <person name="Eisen J.A."/>
            <person name="Salzberg S.L."/>
            <person name="Fraser C.M."/>
            <person name="Venter J.C."/>
        </authorList>
    </citation>
    <scope>NUCLEOTIDE SEQUENCE [LARGE SCALE GENOMIC DNA]</scope>
    <source>
        <strain>cv. Columbia</strain>
    </source>
</reference>
<reference key="2">
    <citation type="journal article" date="2017" name="Plant J.">
        <title>Araport11: a complete reannotation of the Arabidopsis thaliana reference genome.</title>
        <authorList>
            <person name="Cheng C.Y."/>
            <person name="Krishnakumar V."/>
            <person name="Chan A.P."/>
            <person name="Thibaud-Nissen F."/>
            <person name="Schobel S."/>
            <person name="Town C.D."/>
        </authorList>
    </citation>
    <scope>GENOME REANNOTATION</scope>
    <source>
        <strain>cv. Columbia</strain>
    </source>
</reference>
<reference key="3">
    <citation type="journal article" date="2003" name="Science">
        <title>Empirical analysis of transcriptional activity in the Arabidopsis genome.</title>
        <authorList>
            <person name="Yamada K."/>
            <person name="Lim J."/>
            <person name="Dale J.M."/>
            <person name="Chen H."/>
            <person name="Shinn P."/>
            <person name="Palm C.J."/>
            <person name="Southwick A.M."/>
            <person name="Wu H.C."/>
            <person name="Kim C.J."/>
            <person name="Nguyen M."/>
            <person name="Pham P.K."/>
            <person name="Cheuk R.F."/>
            <person name="Karlin-Newmann G."/>
            <person name="Liu S.X."/>
            <person name="Lam B."/>
            <person name="Sakano H."/>
            <person name="Wu T."/>
            <person name="Yu G."/>
            <person name="Miranda M."/>
            <person name="Quach H.L."/>
            <person name="Tripp M."/>
            <person name="Chang C.H."/>
            <person name="Lee J.M."/>
            <person name="Toriumi M.J."/>
            <person name="Chan M.M."/>
            <person name="Tang C.C."/>
            <person name="Onodera C.S."/>
            <person name="Deng J.M."/>
            <person name="Akiyama K."/>
            <person name="Ansari Y."/>
            <person name="Arakawa T."/>
            <person name="Banh J."/>
            <person name="Banno F."/>
            <person name="Bowser L."/>
            <person name="Brooks S.Y."/>
            <person name="Carninci P."/>
            <person name="Chao Q."/>
            <person name="Choy N."/>
            <person name="Enju A."/>
            <person name="Goldsmith A.D."/>
            <person name="Gurjal M."/>
            <person name="Hansen N.F."/>
            <person name="Hayashizaki Y."/>
            <person name="Johnson-Hopson C."/>
            <person name="Hsuan V.W."/>
            <person name="Iida K."/>
            <person name="Karnes M."/>
            <person name="Khan S."/>
            <person name="Koesema E."/>
            <person name="Ishida J."/>
            <person name="Jiang P.X."/>
            <person name="Jones T."/>
            <person name="Kawai J."/>
            <person name="Kamiya A."/>
            <person name="Meyers C."/>
            <person name="Nakajima M."/>
            <person name="Narusaka M."/>
            <person name="Seki M."/>
            <person name="Sakurai T."/>
            <person name="Satou M."/>
            <person name="Tamse R."/>
            <person name="Vaysberg M."/>
            <person name="Wallender E.K."/>
            <person name="Wong C."/>
            <person name="Yamamura Y."/>
            <person name="Yuan S."/>
            <person name="Shinozaki K."/>
            <person name="Davis R.W."/>
            <person name="Theologis A."/>
            <person name="Ecker J.R."/>
        </authorList>
    </citation>
    <scope>NUCLEOTIDE SEQUENCE [LARGE SCALE MRNA]</scope>
    <source>
        <strain>cv. Columbia</strain>
    </source>
</reference>
<reference key="4">
    <citation type="journal article" date="2002" name="Plant Cell Physiol.">
        <title>The XTH family of enzymes involved in xyloglucan endotransglucosylation and endohydrolysis: current perspectives and a new unifying nomenclature.</title>
        <authorList>
            <person name="Rose J.K.C."/>
            <person name="Braam J."/>
            <person name="Fry S.C."/>
            <person name="Nishitani K."/>
        </authorList>
    </citation>
    <scope>NOMENCLATURE</scope>
</reference>
<evidence type="ECO:0000250" key="1"/>
<evidence type="ECO:0000250" key="2">
    <source>
        <dbReference type="UniProtKB" id="Q8GZD5"/>
    </source>
</evidence>
<evidence type="ECO:0000255" key="3"/>
<evidence type="ECO:0000255" key="4">
    <source>
        <dbReference type="PROSITE-ProRule" id="PRU01098"/>
    </source>
</evidence>
<evidence type="ECO:0000305" key="5"/>
<gene>
    <name type="primary">XTH10</name>
    <name type="synonym">XTR14</name>
    <name type="ordered locus">At2g14620</name>
    <name type="ORF">T6B13.14</name>
</gene>
<name>XTH10_ARATH</name>
<keyword id="KW-0052">Apoplast</keyword>
<keyword id="KW-0134">Cell wall</keyword>
<keyword id="KW-0961">Cell wall biogenesis/degradation</keyword>
<keyword id="KW-1015">Disulfide bond</keyword>
<keyword id="KW-0325">Glycoprotein</keyword>
<keyword id="KW-0326">Glycosidase</keyword>
<keyword id="KW-0378">Hydrolase</keyword>
<keyword id="KW-1185">Reference proteome</keyword>
<keyword id="KW-0964">Secreted</keyword>
<keyword id="KW-0732">Signal</keyword>
<keyword id="KW-0808">Transferase</keyword>
<accession>Q9ZVK1</accession>
<protein>
    <recommendedName>
        <fullName>Probable xyloglucan endotransglucosylase/hydrolase protein 10</fullName>
        <shortName>At-XTH10</shortName>
        <shortName>XTH-10</shortName>
        <ecNumber>2.4.1.207</ecNumber>
    </recommendedName>
</protein>
<dbReference type="EC" id="2.4.1.207"/>
<dbReference type="EMBL" id="AC005398">
    <property type="protein sequence ID" value="AAC69380.1"/>
    <property type="molecule type" value="Genomic_DNA"/>
</dbReference>
<dbReference type="EMBL" id="CP002685">
    <property type="protein sequence ID" value="AEC06315.1"/>
    <property type="molecule type" value="Genomic_DNA"/>
</dbReference>
<dbReference type="EMBL" id="AY070415">
    <property type="protein sequence ID" value="AAL49911.1"/>
    <property type="molecule type" value="mRNA"/>
</dbReference>
<dbReference type="EMBL" id="AY096596">
    <property type="protein sequence ID" value="AAM20246.1"/>
    <property type="molecule type" value="mRNA"/>
</dbReference>
<dbReference type="PIR" id="D84519">
    <property type="entry name" value="D84519"/>
</dbReference>
<dbReference type="RefSeq" id="NP_179069.1">
    <property type="nucleotide sequence ID" value="NM_127026.4"/>
</dbReference>
<dbReference type="SMR" id="Q9ZVK1"/>
<dbReference type="FunCoup" id="Q9ZVK1">
    <property type="interactions" value="34"/>
</dbReference>
<dbReference type="STRING" id="3702.Q9ZVK1"/>
<dbReference type="CAZy" id="GH16">
    <property type="family name" value="Glycoside Hydrolase Family 16"/>
</dbReference>
<dbReference type="GlyCosmos" id="Q9ZVK1">
    <property type="glycosylation" value="2 sites, No reported glycans"/>
</dbReference>
<dbReference type="GlyGen" id="Q9ZVK1">
    <property type="glycosylation" value="2 sites"/>
</dbReference>
<dbReference type="PaxDb" id="3702-AT2G14620.1"/>
<dbReference type="ProteomicsDB" id="242495"/>
<dbReference type="EnsemblPlants" id="AT2G14620.1">
    <property type="protein sequence ID" value="AT2G14620.1"/>
    <property type="gene ID" value="AT2G14620"/>
</dbReference>
<dbReference type="GeneID" id="815950"/>
<dbReference type="Gramene" id="AT2G14620.1">
    <property type="protein sequence ID" value="AT2G14620.1"/>
    <property type="gene ID" value="AT2G14620"/>
</dbReference>
<dbReference type="KEGG" id="ath:AT2G14620"/>
<dbReference type="Araport" id="AT2G14620"/>
<dbReference type="TAIR" id="AT2G14620">
    <property type="gene designation" value="XTH10"/>
</dbReference>
<dbReference type="eggNOG" id="ENOG502QQ71">
    <property type="taxonomic scope" value="Eukaryota"/>
</dbReference>
<dbReference type="HOGENOM" id="CLU_048041_0_0_1"/>
<dbReference type="InParanoid" id="Q9ZVK1"/>
<dbReference type="OMA" id="CVWNGNP"/>
<dbReference type="PhylomeDB" id="Q9ZVK1"/>
<dbReference type="BioCyc" id="ARA:AT2G14620-MONOMER"/>
<dbReference type="PRO" id="PR:Q9ZVK1"/>
<dbReference type="Proteomes" id="UP000006548">
    <property type="component" value="Chromosome 2"/>
</dbReference>
<dbReference type="ExpressionAtlas" id="Q9ZVK1">
    <property type="expression patterns" value="baseline and differential"/>
</dbReference>
<dbReference type="GO" id="GO:0048046">
    <property type="term" value="C:apoplast"/>
    <property type="evidence" value="ECO:0007669"/>
    <property type="project" value="UniProtKB-SubCell"/>
</dbReference>
<dbReference type="GO" id="GO:0004553">
    <property type="term" value="F:hydrolase activity, hydrolyzing O-glycosyl compounds"/>
    <property type="evidence" value="ECO:0007669"/>
    <property type="project" value="InterPro"/>
</dbReference>
<dbReference type="GO" id="GO:0030247">
    <property type="term" value="F:polysaccharide binding"/>
    <property type="evidence" value="ECO:0000250"/>
    <property type="project" value="UniProtKB"/>
</dbReference>
<dbReference type="GO" id="GO:0016762">
    <property type="term" value="F:xyloglucan:xyloglucosyl transferase activity"/>
    <property type="evidence" value="ECO:0007669"/>
    <property type="project" value="UniProtKB-EC"/>
</dbReference>
<dbReference type="GO" id="GO:0042546">
    <property type="term" value="P:cell wall biogenesis"/>
    <property type="evidence" value="ECO:0007669"/>
    <property type="project" value="InterPro"/>
</dbReference>
<dbReference type="GO" id="GO:0071555">
    <property type="term" value="P:cell wall organization"/>
    <property type="evidence" value="ECO:0007669"/>
    <property type="project" value="UniProtKB-KW"/>
</dbReference>
<dbReference type="GO" id="GO:0010411">
    <property type="term" value="P:xyloglucan metabolic process"/>
    <property type="evidence" value="ECO:0007669"/>
    <property type="project" value="InterPro"/>
</dbReference>
<dbReference type="CDD" id="cd02176">
    <property type="entry name" value="GH16_XET"/>
    <property type="match status" value="1"/>
</dbReference>
<dbReference type="FunFam" id="2.60.120.200:FF:000025">
    <property type="entry name" value="Xyloglucan endotransglucosylase/hydrolase"/>
    <property type="match status" value="1"/>
</dbReference>
<dbReference type="Gene3D" id="2.60.120.200">
    <property type="match status" value="1"/>
</dbReference>
<dbReference type="InterPro" id="IPR044791">
    <property type="entry name" value="Beta-glucanase/XTH"/>
</dbReference>
<dbReference type="InterPro" id="IPR013320">
    <property type="entry name" value="ConA-like_dom_sf"/>
</dbReference>
<dbReference type="InterPro" id="IPR000757">
    <property type="entry name" value="GH16"/>
</dbReference>
<dbReference type="InterPro" id="IPR010713">
    <property type="entry name" value="XET_C"/>
</dbReference>
<dbReference type="InterPro" id="IPR016455">
    <property type="entry name" value="XTH"/>
</dbReference>
<dbReference type="PANTHER" id="PTHR31062">
    <property type="entry name" value="XYLOGLUCAN ENDOTRANSGLUCOSYLASE/HYDROLASE PROTEIN 8-RELATED"/>
    <property type="match status" value="1"/>
</dbReference>
<dbReference type="Pfam" id="PF00722">
    <property type="entry name" value="Glyco_hydro_16"/>
    <property type="match status" value="1"/>
</dbReference>
<dbReference type="Pfam" id="PF06955">
    <property type="entry name" value="XET_C"/>
    <property type="match status" value="1"/>
</dbReference>
<dbReference type="PIRSF" id="PIRSF005604">
    <property type="entry name" value="XET"/>
    <property type="match status" value="1"/>
</dbReference>
<dbReference type="SUPFAM" id="SSF49899">
    <property type="entry name" value="Concanavalin A-like lectins/glucanases"/>
    <property type="match status" value="1"/>
</dbReference>
<dbReference type="PROSITE" id="PS51762">
    <property type="entry name" value="GH16_2"/>
    <property type="match status" value="1"/>
</dbReference>
<proteinExistence type="evidence at transcript level"/>